<accession>P44364</accession>
<protein>
    <recommendedName>
        <fullName evidence="2">Large ribosomal subunit protein bL28</fullName>
    </recommendedName>
    <alternativeName>
        <fullName evidence="3">50S ribosomal protein L28</fullName>
    </alternativeName>
</protein>
<comment type="similarity">
    <text evidence="2">Belongs to the bacterial ribosomal protein bL28 family.</text>
</comment>
<gene>
    <name evidence="2" type="primary">rpmB</name>
    <name evidence="2" type="synonym">rpl28</name>
    <name type="ordered locus">HI_0951</name>
</gene>
<evidence type="ECO:0000250" key="1"/>
<evidence type="ECO:0000255" key="2">
    <source>
        <dbReference type="HAMAP-Rule" id="MF_00373"/>
    </source>
</evidence>
<evidence type="ECO:0000305" key="3"/>
<organism>
    <name type="scientific">Haemophilus influenzae (strain ATCC 51907 / DSM 11121 / KW20 / Rd)</name>
    <dbReference type="NCBI Taxonomy" id="71421"/>
    <lineage>
        <taxon>Bacteria</taxon>
        <taxon>Pseudomonadati</taxon>
        <taxon>Pseudomonadota</taxon>
        <taxon>Gammaproteobacteria</taxon>
        <taxon>Pasteurellales</taxon>
        <taxon>Pasteurellaceae</taxon>
        <taxon>Haemophilus</taxon>
    </lineage>
</organism>
<dbReference type="EMBL" id="L42023">
    <property type="protein sequence ID" value="AAC22612.1"/>
    <property type="molecule type" value="Genomic_DNA"/>
</dbReference>
<dbReference type="PIR" id="E64104">
    <property type="entry name" value="E64104"/>
</dbReference>
<dbReference type="RefSeq" id="NP_439112.1">
    <property type="nucleotide sequence ID" value="NC_000907.1"/>
</dbReference>
<dbReference type="SMR" id="P44364"/>
<dbReference type="STRING" id="71421.HI_0951"/>
<dbReference type="EnsemblBacteria" id="AAC22612">
    <property type="protein sequence ID" value="AAC22612"/>
    <property type="gene ID" value="HI_0951"/>
</dbReference>
<dbReference type="KEGG" id="hin:HI_0951"/>
<dbReference type="PATRIC" id="fig|71421.8.peg.993"/>
<dbReference type="eggNOG" id="COG0227">
    <property type="taxonomic scope" value="Bacteria"/>
</dbReference>
<dbReference type="HOGENOM" id="CLU_064548_3_1_6"/>
<dbReference type="OrthoDB" id="9805609at2"/>
<dbReference type="PhylomeDB" id="P44364"/>
<dbReference type="BioCyc" id="HINF71421:G1GJ1-992-MONOMER"/>
<dbReference type="Proteomes" id="UP000000579">
    <property type="component" value="Chromosome"/>
</dbReference>
<dbReference type="GO" id="GO:0022625">
    <property type="term" value="C:cytosolic large ribosomal subunit"/>
    <property type="evidence" value="ECO:0000318"/>
    <property type="project" value="GO_Central"/>
</dbReference>
<dbReference type="GO" id="GO:0003735">
    <property type="term" value="F:structural constituent of ribosome"/>
    <property type="evidence" value="ECO:0000318"/>
    <property type="project" value="GO_Central"/>
</dbReference>
<dbReference type="GO" id="GO:0006412">
    <property type="term" value="P:translation"/>
    <property type="evidence" value="ECO:0007669"/>
    <property type="project" value="UniProtKB-UniRule"/>
</dbReference>
<dbReference type="FunFam" id="2.30.170.40:FF:000001">
    <property type="entry name" value="50S ribosomal protein L28"/>
    <property type="match status" value="1"/>
</dbReference>
<dbReference type="Gene3D" id="2.30.170.40">
    <property type="entry name" value="Ribosomal protein L28/L24"/>
    <property type="match status" value="1"/>
</dbReference>
<dbReference type="HAMAP" id="MF_00373">
    <property type="entry name" value="Ribosomal_bL28"/>
    <property type="match status" value="1"/>
</dbReference>
<dbReference type="InterPro" id="IPR026569">
    <property type="entry name" value="Ribosomal_bL28"/>
</dbReference>
<dbReference type="InterPro" id="IPR034704">
    <property type="entry name" value="Ribosomal_bL28/bL31-like_sf"/>
</dbReference>
<dbReference type="InterPro" id="IPR001383">
    <property type="entry name" value="Ribosomal_bL28_bact-type"/>
</dbReference>
<dbReference type="InterPro" id="IPR037147">
    <property type="entry name" value="Ribosomal_bL28_sf"/>
</dbReference>
<dbReference type="NCBIfam" id="TIGR00009">
    <property type="entry name" value="L28"/>
    <property type="match status" value="1"/>
</dbReference>
<dbReference type="PANTHER" id="PTHR13528">
    <property type="entry name" value="39S RIBOSOMAL PROTEIN L28, MITOCHONDRIAL"/>
    <property type="match status" value="1"/>
</dbReference>
<dbReference type="PANTHER" id="PTHR13528:SF2">
    <property type="entry name" value="LARGE RIBOSOMAL SUBUNIT PROTEIN BL28M"/>
    <property type="match status" value="1"/>
</dbReference>
<dbReference type="Pfam" id="PF00830">
    <property type="entry name" value="Ribosomal_L28"/>
    <property type="match status" value="1"/>
</dbReference>
<dbReference type="SUPFAM" id="SSF143800">
    <property type="entry name" value="L28p-like"/>
    <property type="match status" value="1"/>
</dbReference>
<sequence length="78" mass="8985">MSRVCQVTGKRPAVGNNRSHAMNATRRRFLPNLHTHRFWVESENRFVTLRLTAKGMRIIDKKGIDAVLAEIRARGEKI</sequence>
<keyword id="KW-1185">Reference proteome</keyword>
<keyword id="KW-0687">Ribonucleoprotein</keyword>
<keyword id="KW-0689">Ribosomal protein</keyword>
<reference key="1">
    <citation type="journal article" date="1995" name="Science">
        <title>Whole-genome random sequencing and assembly of Haemophilus influenzae Rd.</title>
        <authorList>
            <person name="Fleischmann R.D."/>
            <person name="Adams M.D."/>
            <person name="White O."/>
            <person name="Clayton R.A."/>
            <person name="Kirkness E.F."/>
            <person name="Kerlavage A.R."/>
            <person name="Bult C.J."/>
            <person name="Tomb J.-F."/>
            <person name="Dougherty B.A."/>
            <person name="Merrick J.M."/>
            <person name="McKenney K."/>
            <person name="Sutton G.G."/>
            <person name="FitzHugh W."/>
            <person name="Fields C.A."/>
            <person name="Gocayne J.D."/>
            <person name="Scott J.D."/>
            <person name="Shirley R."/>
            <person name="Liu L.-I."/>
            <person name="Glodek A."/>
            <person name="Kelley J.M."/>
            <person name="Weidman J.F."/>
            <person name="Phillips C.A."/>
            <person name="Spriggs T."/>
            <person name="Hedblom E."/>
            <person name="Cotton M.D."/>
            <person name="Utterback T.R."/>
            <person name="Hanna M.C."/>
            <person name="Nguyen D.T."/>
            <person name="Saudek D.M."/>
            <person name="Brandon R.C."/>
            <person name="Fine L.D."/>
            <person name="Fritchman J.L."/>
            <person name="Fuhrmann J.L."/>
            <person name="Geoghagen N.S.M."/>
            <person name="Gnehm C.L."/>
            <person name="McDonald L.A."/>
            <person name="Small K.V."/>
            <person name="Fraser C.M."/>
            <person name="Smith H.O."/>
            <person name="Venter J.C."/>
        </authorList>
    </citation>
    <scope>NUCLEOTIDE SEQUENCE [LARGE SCALE GENOMIC DNA]</scope>
    <source>
        <strain>ATCC 51907 / DSM 11121 / KW20 / Rd</strain>
    </source>
</reference>
<name>RL28_HAEIN</name>
<feature type="initiator methionine" description="Removed" evidence="1">
    <location>
        <position position="1"/>
    </location>
</feature>
<feature type="chain" id="PRO_0000178480" description="Large ribosomal subunit protein bL28">
    <location>
        <begin position="2"/>
        <end position="78"/>
    </location>
</feature>
<proteinExistence type="inferred from homology"/>